<organism>
    <name type="scientific">Caenorhabditis briggsae</name>
    <dbReference type="NCBI Taxonomy" id="6238"/>
    <lineage>
        <taxon>Eukaryota</taxon>
        <taxon>Metazoa</taxon>
        <taxon>Ecdysozoa</taxon>
        <taxon>Nematoda</taxon>
        <taxon>Chromadorea</taxon>
        <taxon>Rhabditida</taxon>
        <taxon>Rhabditina</taxon>
        <taxon>Rhabditomorpha</taxon>
        <taxon>Rhabditoidea</taxon>
        <taxon>Rhabditidae</taxon>
        <taxon>Peloderinae</taxon>
        <taxon>Caenorhabditis</taxon>
    </lineage>
</organism>
<evidence type="ECO:0000250" key="1"/>
<evidence type="ECO:0000250" key="2">
    <source>
        <dbReference type="UniProtKB" id="P92186"/>
    </source>
</evidence>
<evidence type="ECO:0000255" key="3">
    <source>
        <dbReference type="PROSITE-ProRule" id="PRU00047"/>
    </source>
</evidence>
<evidence type="ECO:0000256" key="4">
    <source>
        <dbReference type="SAM" id="MobiDB-lite"/>
    </source>
</evidence>
<evidence type="ECO:0000305" key="5"/>
<comment type="function">
    <text evidence="2">Heterochronic protein which controls the choice of stage specific cell fates (By similarity). Regulates the timing of the second larval stage events (L2 events) in the hypodermis (By similarity). May negatively regulate the larval to adult transition via the suppression of the microRNA (miRNA) let-7 during L3 (By similarity). Through this regulatory role, controls the timing of the sexual maturation of the nervous system (By similarity). Plays a role in governing the developmental timing of male tail tip morphogenesis (By similarity). Plays a role in the control of seam cell number and vulval development (By similarity).</text>
</comment>
<comment type="subunit">
    <text evidence="2">Component of a complex at least containing lep-2, lin-28 and the long non-coding RNA lep-5, which mediates the degradation of lin-28.</text>
</comment>
<comment type="subcellular location">
    <subcellularLocation>
        <location evidence="2">Cytoplasm</location>
    </subcellularLocation>
</comment>
<comment type="similarity">
    <text evidence="5">Belongs to the lin-28 family.</text>
</comment>
<gene>
    <name type="primary">lin-28</name>
    <name type="ORF">CBG12720</name>
</gene>
<name>LIN28_CAEBR</name>
<protein>
    <recommendedName>
        <fullName>Protein lin-28</fullName>
    </recommendedName>
    <alternativeName>
        <fullName>Abnormal cell lineage protein 28</fullName>
    </alternativeName>
</protein>
<accession>Q61CX7</accession>
<accession>A8XGF0</accession>
<reference key="1">
    <citation type="journal article" date="2003" name="PLoS Biol.">
        <title>The genome sequence of Caenorhabditis briggsae: a platform for comparative genomics.</title>
        <authorList>
            <person name="Stein L.D."/>
            <person name="Bao Z."/>
            <person name="Blasiar D."/>
            <person name="Blumenthal T."/>
            <person name="Brent M.R."/>
            <person name="Chen N."/>
            <person name="Chinwalla A."/>
            <person name="Clarke L."/>
            <person name="Clee C."/>
            <person name="Coghlan A."/>
            <person name="Coulson A."/>
            <person name="D'Eustachio P."/>
            <person name="Fitch D.H.A."/>
            <person name="Fulton L.A."/>
            <person name="Fulton R.E."/>
            <person name="Griffiths-Jones S."/>
            <person name="Harris T.W."/>
            <person name="Hillier L.W."/>
            <person name="Kamath R."/>
            <person name="Kuwabara P.E."/>
            <person name="Mardis E.R."/>
            <person name="Marra M.A."/>
            <person name="Miner T.L."/>
            <person name="Minx P."/>
            <person name="Mullikin J.C."/>
            <person name="Plumb R.W."/>
            <person name="Rogers J."/>
            <person name="Schein J.E."/>
            <person name="Sohrmann M."/>
            <person name="Spieth J."/>
            <person name="Stajich J.E."/>
            <person name="Wei C."/>
            <person name="Willey D."/>
            <person name="Wilson R.K."/>
            <person name="Durbin R.M."/>
            <person name="Waterston R.H."/>
        </authorList>
    </citation>
    <scope>NUCLEOTIDE SEQUENCE [LARGE SCALE GENOMIC DNA]</scope>
    <source>
        <strain>AF16</strain>
    </source>
</reference>
<keyword id="KW-0963">Cytoplasm</keyword>
<keyword id="KW-0217">Developmental protein</keyword>
<keyword id="KW-0479">Metal-binding</keyword>
<keyword id="KW-1185">Reference proteome</keyword>
<keyword id="KW-0677">Repeat</keyword>
<keyword id="KW-0862">Zinc</keyword>
<keyword id="KW-0863">Zinc-finger</keyword>
<sequence>MSTVVSEGRNGGNERYSPQDDVSKELPDINGLSLEETMGIPSFDRLPSPTPRYFGSCKWFNVSKGYGFVIDDNTGEDLFVHQSNLNMQGFRSLDEGERVSYYIQERSNGKGKEAYAVSGEVEGQGLKGSRIHPLGRKKAVSLRCFRCGKFATHKAKGCPNVKTDAKVCYTCGSEEHVSSVCPERRRKHRPEQVAAEEAEAARLAQEEADRSSPEENERKDGKLVEQKETETADKAGK</sequence>
<dbReference type="EMBL" id="HE600940">
    <property type="protein sequence ID" value="CAP31656.3"/>
    <property type="molecule type" value="Genomic_DNA"/>
</dbReference>
<dbReference type="SMR" id="Q61CX7"/>
<dbReference type="FunCoup" id="Q61CX7">
    <property type="interactions" value="237"/>
</dbReference>
<dbReference type="STRING" id="6238.Q61CX7"/>
<dbReference type="EnsemblMetazoa" id="CBG12720b.1">
    <property type="protein sequence ID" value="CBG12720b.1"/>
    <property type="gene ID" value="WBGene00033626"/>
</dbReference>
<dbReference type="WormBase" id="CBG12720a">
    <property type="protein sequence ID" value="CBP35906"/>
    <property type="gene ID" value="WBGene00033626"/>
    <property type="gene designation" value="Cbr-lin-28"/>
</dbReference>
<dbReference type="eggNOG" id="KOG3070">
    <property type="taxonomic scope" value="Eukaryota"/>
</dbReference>
<dbReference type="HOGENOM" id="CLU_089169_2_0_1"/>
<dbReference type="InParanoid" id="Q61CX7"/>
<dbReference type="OMA" id="RCYNCAG"/>
<dbReference type="OrthoDB" id="422005at2759"/>
<dbReference type="Proteomes" id="UP000008549">
    <property type="component" value="Unassembled WGS sequence"/>
</dbReference>
<dbReference type="GO" id="GO:0005737">
    <property type="term" value="C:cytoplasm"/>
    <property type="evidence" value="ECO:0000250"/>
    <property type="project" value="UniProtKB"/>
</dbReference>
<dbReference type="GO" id="GO:0005634">
    <property type="term" value="C:nucleus"/>
    <property type="evidence" value="ECO:0000318"/>
    <property type="project" value="GO_Central"/>
</dbReference>
<dbReference type="GO" id="GO:0019899">
    <property type="term" value="F:enzyme binding"/>
    <property type="evidence" value="ECO:0007669"/>
    <property type="project" value="EnsemblMetazoa"/>
</dbReference>
<dbReference type="GO" id="GO:0003730">
    <property type="term" value="F:mRNA 3'-UTR binding"/>
    <property type="evidence" value="ECO:0007669"/>
    <property type="project" value="EnsemblMetazoa"/>
</dbReference>
<dbReference type="GO" id="GO:0003729">
    <property type="term" value="F:mRNA binding"/>
    <property type="evidence" value="ECO:0000318"/>
    <property type="project" value="GO_Central"/>
</dbReference>
<dbReference type="GO" id="GO:1990715">
    <property type="term" value="F:mRNA CDS binding"/>
    <property type="evidence" value="ECO:0007669"/>
    <property type="project" value="EnsemblMetazoa"/>
</dbReference>
<dbReference type="GO" id="GO:0070883">
    <property type="term" value="F:pre-miRNA binding"/>
    <property type="evidence" value="ECO:0007669"/>
    <property type="project" value="EnsemblMetazoa"/>
</dbReference>
<dbReference type="GO" id="GO:0070878">
    <property type="term" value="F:primary miRNA binding"/>
    <property type="evidence" value="ECO:0007669"/>
    <property type="project" value="EnsemblMetazoa"/>
</dbReference>
<dbReference type="GO" id="GO:0008270">
    <property type="term" value="F:zinc ion binding"/>
    <property type="evidence" value="ECO:0007669"/>
    <property type="project" value="UniProtKB-KW"/>
</dbReference>
<dbReference type="GO" id="GO:0001708">
    <property type="term" value="P:cell fate specification"/>
    <property type="evidence" value="ECO:0000250"/>
    <property type="project" value="UniProtKB"/>
</dbReference>
<dbReference type="GO" id="GO:2000635">
    <property type="term" value="P:negative regulation of primary miRNA processing"/>
    <property type="evidence" value="ECO:0007669"/>
    <property type="project" value="EnsemblMetazoa"/>
</dbReference>
<dbReference type="GO" id="GO:0031054">
    <property type="term" value="P:pre-miRNA processing"/>
    <property type="evidence" value="ECO:0000318"/>
    <property type="project" value="GO_Central"/>
</dbReference>
<dbReference type="GO" id="GO:0042659">
    <property type="term" value="P:regulation of cell fate specification"/>
    <property type="evidence" value="ECO:0007669"/>
    <property type="project" value="EnsemblMetazoa"/>
</dbReference>
<dbReference type="GO" id="GO:0040034">
    <property type="term" value="P:regulation of development, heterochronic"/>
    <property type="evidence" value="ECO:0007669"/>
    <property type="project" value="EnsemblMetazoa"/>
</dbReference>
<dbReference type="GO" id="GO:0007549">
    <property type="term" value="P:sex-chromosome dosage compensation"/>
    <property type="evidence" value="ECO:0007669"/>
    <property type="project" value="EnsemblMetazoa"/>
</dbReference>
<dbReference type="CDD" id="cd04458">
    <property type="entry name" value="CSP_CDS"/>
    <property type="match status" value="1"/>
</dbReference>
<dbReference type="Gene3D" id="2.40.50.140">
    <property type="entry name" value="Nucleic acid-binding proteins"/>
    <property type="match status" value="1"/>
</dbReference>
<dbReference type="Gene3D" id="4.10.60.10">
    <property type="entry name" value="Zinc finger, CCHC-type"/>
    <property type="match status" value="1"/>
</dbReference>
<dbReference type="InterPro" id="IPR011129">
    <property type="entry name" value="CSD"/>
</dbReference>
<dbReference type="InterPro" id="IPR002059">
    <property type="entry name" value="CSP_DNA-bd"/>
</dbReference>
<dbReference type="InterPro" id="IPR051373">
    <property type="entry name" value="Lin-28_RNA-binding"/>
</dbReference>
<dbReference type="InterPro" id="IPR012340">
    <property type="entry name" value="NA-bd_OB-fold"/>
</dbReference>
<dbReference type="InterPro" id="IPR001878">
    <property type="entry name" value="Znf_CCHC"/>
</dbReference>
<dbReference type="InterPro" id="IPR036875">
    <property type="entry name" value="Znf_CCHC_sf"/>
</dbReference>
<dbReference type="PANTHER" id="PTHR46109">
    <property type="entry name" value="PROTEIN LIN-28"/>
    <property type="match status" value="1"/>
</dbReference>
<dbReference type="PANTHER" id="PTHR46109:SF1">
    <property type="entry name" value="PROTEIN LIN-28 HOMOLOG"/>
    <property type="match status" value="1"/>
</dbReference>
<dbReference type="Pfam" id="PF00313">
    <property type="entry name" value="CSD"/>
    <property type="match status" value="1"/>
</dbReference>
<dbReference type="Pfam" id="PF00098">
    <property type="entry name" value="zf-CCHC"/>
    <property type="match status" value="1"/>
</dbReference>
<dbReference type="PRINTS" id="PR00050">
    <property type="entry name" value="COLDSHOCK"/>
</dbReference>
<dbReference type="SMART" id="SM00357">
    <property type="entry name" value="CSP"/>
    <property type="match status" value="1"/>
</dbReference>
<dbReference type="SMART" id="SM00343">
    <property type="entry name" value="ZnF_C2HC"/>
    <property type="match status" value="2"/>
</dbReference>
<dbReference type="SUPFAM" id="SSF50249">
    <property type="entry name" value="Nucleic acid-binding proteins"/>
    <property type="match status" value="1"/>
</dbReference>
<dbReference type="SUPFAM" id="SSF57756">
    <property type="entry name" value="Retrovirus zinc finger-like domains"/>
    <property type="match status" value="1"/>
</dbReference>
<dbReference type="PROSITE" id="PS51857">
    <property type="entry name" value="CSD_2"/>
    <property type="match status" value="1"/>
</dbReference>
<dbReference type="PROSITE" id="PS50158">
    <property type="entry name" value="ZF_CCHC"/>
    <property type="match status" value="1"/>
</dbReference>
<proteinExistence type="inferred from homology"/>
<feature type="chain" id="PRO_0000253798" description="Protein lin-28">
    <location>
        <begin position="1"/>
        <end position="237"/>
    </location>
</feature>
<feature type="domain" description="CSD">
    <location>
        <begin position="52"/>
        <end position="120"/>
    </location>
</feature>
<feature type="zinc finger region" description="CCHC-type 1" evidence="3">
    <location>
        <begin position="143"/>
        <end position="160"/>
    </location>
</feature>
<feature type="zinc finger region" description="CCHC-type 2" evidence="3">
    <location>
        <begin position="166"/>
        <end position="183"/>
    </location>
</feature>
<feature type="region of interest" description="Disordered" evidence="4">
    <location>
        <begin position="1"/>
        <end position="26"/>
    </location>
</feature>
<feature type="region of interest" description="Disordered" evidence="4">
    <location>
        <begin position="180"/>
        <end position="237"/>
    </location>
</feature>
<feature type="compositionally biased region" description="Basic and acidic residues" evidence="4">
    <location>
        <begin position="17"/>
        <end position="26"/>
    </location>
</feature>
<feature type="compositionally biased region" description="Basic and acidic residues" evidence="4">
    <location>
        <begin position="204"/>
        <end position="237"/>
    </location>
</feature>
<feature type="binding site" evidence="1">
    <location>
        <position position="144"/>
    </location>
    <ligand>
        <name>Zn(2+)</name>
        <dbReference type="ChEBI" id="CHEBI:29105"/>
        <label>1</label>
    </ligand>
</feature>
<feature type="binding site" evidence="1">
    <location>
        <position position="147"/>
    </location>
    <ligand>
        <name>Zn(2+)</name>
        <dbReference type="ChEBI" id="CHEBI:29105"/>
        <label>1</label>
    </ligand>
</feature>
<feature type="binding site" evidence="1">
    <location>
        <position position="153"/>
    </location>
    <ligand>
        <name>Zn(2+)</name>
        <dbReference type="ChEBI" id="CHEBI:29105"/>
        <label>1</label>
    </ligand>
</feature>
<feature type="binding site" evidence="1">
    <location>
        <position position="158"/>
    </location>
    <ligand>
        <name>Zn(2+)</name>
        <dbReference type="ChEBI" id="CHEBI:29105"/>
        <label>1</label>
    </ligand>
</feature>
<feature type="binding site" evidence="1">
    <location>
        <position position="168"/>
    </location>
    <ligand>
        <name>Zn(2+)</name>
        <dbReference type="ChEBI" id="CHEBI:29105"/>
        <label>2</label>
    </ligand>
</feature>
<feature type="binding site" evidence="1">
    <location>
        <position position="171"/>
    </location>
    <ligand>
        <name>Zn(2+)</name>
        <dbReference type="ChEBI" id="CHEBI:29105"/>
        <label>2</label>
    </ligand>
</feature>
<feature type="binding site" evidence="1">
    <location>
        <position position="176"/>
    </location>
    <ligand>
        <name>Zn(2+)</name>
        <dbReference type="ChEBI" id="CHEBI:29105"/>
        <label>2</label>
    </ligand>
</feature>
<feature type="binding site" evidence="1">
    <location>
        <position position="181"/>
    </location>
    <ligand>
        <name>Zn(2+)</name>
        <dbReference type="ChEBI" id="CHEBI:29105"/>
        <label>2</label>
    </ligand>
</feature>